<protein>
    <recommendedName>
        <fullName evidence="1">Glucose-6-phosphate isomerase</fullName>
        <shortName evidence="1">GPI</shortName>
        <ecNumber evidence="1">5.3.1.9</ecNumber>
    </recommendedName>
    <alternativeName>
        <fullName evidence="1">Phosphoglucose isomerase</fullName>
        <shortName evidence="1">PGI</shortName>
    </alternativeName>
    <alternativeName>
        <fullName evidence="1">Phosphohexose isomerase</fullName>
        <shortName evidence="1">PHI</shortName>
    </alternativeName>
</protein>
<evidence type="ECO:0000255" key="1">
    <source>
        <dbReference type="HAMAP-Rule" id="MF_00473"/>
    </source>
</evidence>
<keyword id="KW-0963">Cytoplasm</keyword>
<keyword id="KW-0312">Gluconeogenesis</keyword>
<keyword id="KW-0324">Glycolysis</keyword>
<keyword id="KW-0413">Isomerase</keyword>
<keyword id="KW-1185">Reference proteome</keyword>
<dbReference type="EC" id="5.3.1.9" evidence="1"/>
<dbReference type="EMBL" id="CP000155">
    <property type="protein sequence ID" value="ABC32913.1"/>
    <property type="molecule type" value="Genomic_DNA"/>
</dbReference>
<dbReference type="RefSeq" id="WP_011399969.1">
    <property type="nucleotide sequence ID" value="NC_007645.1"/>
</dbReference>
<dbReference type="SMR" id="Q2S8W1"/>
<dbReference type="STRING" id="349521.HCH_06266"/>
<dbReference type="KEGG" id="hch:HCH_06266"/>
<dbReference type="eggNOG" id="COG0166">
    <property type="taxonomic scope" value="Bacteria"/>
</dbReference>
<dbReference type="HOGENOM" id="CLU_017947_3_1_6"/>
<dbReference type="OrthoDB" id="140919at2"/>
<dbReference type="UniPathway" id="UPA00109">
    <property type="reaction ID" value="UER00181"/>
</dbReference>
<dbReference type="UniPathway" id="UPA00138"/>
<dbReference type="Proteomes" id="UP000000238">
    <property type="component" value="Chromosome"/>
</dbReference>
<dbReference type="GO" id="GO:0005829">
    <property type="term" value="C:cytosol"/>
    <property type="evidence" value="ECO:0007669"/>
    <property type="project" value="TreeGrafter"/>
</dbReference>
<dbReference type="GO" id="GO:0097367">
    <property type="term" value="F:carbohydrate derivative binding"/>
    <property type="evidence" value="ECO:0007669"/>
    <property type="project" value="InterPro"/>
</dbReference>
<dbReference type="GO" id="GO:0004347">
    <property type="term" value="F:glucose-6-phosphate isomerase activity"/>
    <property type="evidence" value="ECO:0007669"/>
    <property type="project" value="UniProtKB-UniRule"/>
</dbReference>
<dbReference type="GO" id="GO:0048029">
    <property type="term" value="F:monosaccharide binding"/>
    <property type="evidence" value="ECO:0007669"/>
    <property type="project" value="TreeGrafter"/>
</dbReference>
<dbReference type="GO" id="GO:0006094">
    <property type="term" value="P:gluconeogenesis"/>
    <property type="evidence" value="ECO:0007669"/>
    <property type="project" value="UniProtKB-UniRule"/>
</dbReference>
<dbReference type="GO" id="GO:0051156">
    <property type="term" value="P:glucose 6-phosphate metabolic process"/>
    <property type="evidence" value="ECO:0007669"/>
    <property type="project" value="TreeGrafter"/>
</dbReference>
<dbReference type="GO" id="GO:0006096">
    <property type="term" value="P:glycolytic process"/>
    <property type="evidence" value="ECO:0007669"/>
    <property type="project" value="UniProtKB-UniRule"/>
</dbReference>
<dbReference type="CDD" id="cd05015">
    <property type="entry name" value="SIS_PGI_1"/>
    <property type="match status" value="1"/>
</dbReference>
<dbReference type="CDD" id="cd05016">
    <property type="entry name" value="SIS_PGI_2"/>
    <property type="match status" value="1"/>
</dbReference>
<dbReference type="FunFam" id="3.40.50.10490:FF:000018">
    <property type="entry name" value="Glucose-6-phosphate isomerase"/>
    <property type="match status" value="1"/>
</dbReference>
<dbReference type="Gene3D" id="1.10.1390.10">
    <property type="match status" value="1"/>
</dbReference>
<dbReference type="Gene3D" id="3.40.50.10490">
    <property type="entry name" value="Glucose-6-phosphate isomerase like protein, domain 1"/>
    <property type="match status" value="2"/>
</dbReference>
<dbReference type="HAMAP" id="MF_00473">
    <property type="entry name" value="G6P_isomerase"/>
    <property type="match status" value="1"/>
</dbReference>
<dbReference type="InterPro" id="IPR001672">
    <property type="entry name" value="G6P_Isomerase"/>
</dbReference>
<dbReference type="InterPro" id="IPR023096">
    <property type="entry name" value="G6P_Isomerase_C"/>
</dbReference>
<dbReference type="InterPro" id="IPR018189">
    <property type="entry name" value="Phosphoglucose_isomerase_CS"/>
</dbReference>
<dbReference type="InterPro" id="IPR046348">
    <property type="entry name" value="SIS_dom_sf"/>
</dbReference>
<dbReference type="InterPro" id="IPR035476">
    <property type="entry name" value="SIS_PGI_1"/>
</dbReference>
<dbReference type="InterPro" id="IPR035482">
    <property type="entry name" value="SIS_PGI_2"/>
</dbReference>
<dbReference type="NCBIfam" id="NF001211">
    <property type="entry name" value="PRK00179.1"/>
    <property type="match status" value="1"/>
</dbReference>
<dbReference type="PANTHER" id="PTHR11469">
    <property type="entry name" value="GLUCOSE-6-PHOSPHATE ISOMERASE"/>
    <property type="match status" value="1"/>
</dbReference>
<dbReference type="PANTHER" id="PTHR11469:SF1">
    <property type="entry name" value="GLUCOSE-6-PHOSPHATE ISOMERASE"/>
    <property type="match status" value="1"/>
</dbReference>
<dbReference type="Pfam" id="PF00342">
    <property type="entry name" value="PGI"/>
    <property type="match status" value="1"/>
</dbReference>
<dbReference type="PRINTS" id="PR00662">
    <property type="entry name" value="G6PISOMERASE"/>
</dbReference>
<dbReference type="SUPFAM" id="SSF53697">
    <property type="entry name" value="SIS domain"/>
    <property type="match status" value="1"/>
</dbReference>
<dbReference type="PROSITE" id="PS00765">
    <property type="entry name" value="P_GLUCOSE_ISOMERASE_1"/>
    <property type="match status" value="1"/>
</dbReference>
<dbReference type="PROSITE" id="PS00174">
    <property type="entry name" value="P_GLUCOSE_ISOMERASE_2"/>
    <property type="match status" value="1"/>
</dbReference>
<dbReference type="PROSITE" id="PS51463">
    <property type="entry name" value="P_GLUCOSE_ISOMERASE_3"/>
    <property type="match status" value="1"/>
</dbReference>
<gene>
    <name evidence="1" type="primary">pgi</name>
    <name type="ordered locus">HCH_06266</name>
</gene>
<comment type="function">
    <text evidence="1">Catalyzes the reversible isomerization of glucose-6-phosphate to fructose-6-phosphate.</text>
</comment>
<comment type="catalytic activity">
    <reaction evidence="1">
        <text>alpha-D-glucose 6-phosphate = beta-D-fructose 6-phosphate</text>
        <dbReference type="Rhea" id="RHEA:11816"/>
        <dbReference type="ChEBI" id="CHEBI:57634"/>
        <dbReference type="ChEBI" id="CHEBI:58225"/>
        <dbReference type="EC" id="5.3.1.9"/>
    </reaction>
</comment>
<comment type="pathway">
    <text evidence="1">Carbohydrate biosynthesis; gluconeogenesis.</text>
</comment>
<comment type="pathway">
    <text evidence="1">Carbohydrate degradation; glycolysis; D-glyceraldehyde 3-phosphate and glycerone phosphate from D-glucose: step 2/4.</text>
</comment>
<comment type="subcellular location">
    <subcellularLocation>
        <location evidence="1">Cytoplasm</location>
    </subcellularLocation>
</comment>
<comment type="similarity">
    <text evidence="1">Belongs to the GPI family.</text>
</comment>
<feature type="chain" id="PRO_0000252623" description="Glucose-6-phosphate isomerase">
    <location>
        <begin position="1"/>
        <end position="557"/>
    </location>
</feature>
<feature type="active site" description="Proton donor" evidence="1">
    <location>
        <position position="359"/>
    </location>
</feature>
<feature type="active site" evidence="1">
    <location>
        <position position="390"/>
    </location>
</feature>
<feature type="active site" evidence="1">
    <location>
        <position position="518"/>
    </location>
</feature>
<accession>Q2S8W1</accession>
<reference key="1">
    <citation type="journal article" date="2005" name="Nucleic Acids Res.">
        <title>Genomic blueprint of Hahella chejuensis, a marine microbe producing an algicidal agent.</title>
        <authorList>
            <person name="Jeong H."/>
            <person name="Yim J.H."/>
            <person name="Lee C."/>
            <person name="Choi S.-H."/>
            <person name="Park Y.K."/>
            <person name="Yoon S.H."/>
            <person name="Hur C.-G."/>
            <person name="Kang H.-Y."/>
            <person name="Kim D."/>
            <person name="Lee H.H."/>
            <person name="Park K.H."/>
            <person name="Park S.-H."/>
            <person name="Park H.-S."/>
            <person name="Lee H.K."/>
            <person name="Oh T.K."/>
            <person name="Kim J.F."/>
        </authorList>
    </citation>
    <scope>NUCLEOTIDE SEQUENCE [LARGE SCALE GENOMIC DNA]</scope>
    <source>
        <strain>KCTC 2396</strain>
    </source>
</reference>
<organism>
    <name type="scientific">Hahella chejuensis (strain KCTC 2396)</name>
    <dbReference type="NCBI Taxonomy" id="349521"/>
    <lineage>
        <taxon>Bacteria</taxon>
        <taxon>Pseudomonadati</taxon>
        <taxon>Pseudomonadota</taxon>
        <taxon>Gammaproteobacteria</taxon>
        <taxon>Oceanospirillales</taxon>
        <taxon>Hahellaceae</taxon>
        <taxon>Hahella</taxon>
    </lineage>
</organism>
<sequence length="557" mass="61339">MQDTPQTLNDKAKESWRALQQHAADTANDHILDYFHSDPSRVQSYSLTAAGLTLDYSKNRANSITLEKLVKLAEDAGMKRSIDAMFAGEPINHTEGRAVLHTALRDSSDTPVLVDGQDIKPEIRSALAQMERFVSKVHRGEWLGYSGKPINDVVSIGIGGSYLGPRVAVEALRPYWQENIRCHFVSNVDGSDIAYTLENLNPETTLFIVQSKSFTTQETLANSMTAREWYLREGGSEAGLSKHFVAVSSNVQRARDFGIDAENVFPMWDWVGGRYSLWSAIGLPIALQVDMKAFRELLAGAEAMDQHFKTAPLEQNMPVLMGMLGIWYHNFLGADSYVILPYDQTLENLPAHLQQVDMESNGKGVNRAGIGVDYATGPIIWGGAGTNGQHAYHQLLHQGTRWTPADFILPLKTHKPAGRHHAMLASNCFAQSQALMCGKSLEKARQELLDAGMSSERAEELAPHKVIPGNRPSNTLVMDEINPHTLGALIALYEQKVFVQGVIWNLNSFDQWGVELGKQLSDSILPMLLDTGASTDALDPSSAALVERFRRANGSGS</sequence>
<proteinExistence type="inferred from homology"/>
<name>G6PI_HAHCH</name>